<gene>
    <name type="primary">cpcD3</name>
</gene>
<accession>P14878</accession>
<dbReference type="EMBL" id="X06083">
    <property type="protein sequence ID" value="CAA29463.1"/>
    <property type="molecule type" value="Genomic_DNA"/>
</dbReference>
<dbReference type="SMR" id="P14878"/>
<dbReference type="GO" id="GO:0030089">
    <property type="term" value="C:phycobilisome"/>
    <property type="evidence" value="ECO:0007669"/>
    <property type="project" value="UniProtKB-KW"/>
</dbReference>
<dbReference type="GO" id="GO:0031676">
    <property type="term" value="C:plasma membrane-derived thylakoid membrane"/>
    <property type="evidence" value="ECO:0007669"/>
    <property type="project" value="UniProtKB-SubCell"/>
</dbReference>
<dbReference type="GO" id="GO:0015979">
    <property type="term" value="P:photosynthesis"/>
    <property type="evidence" value="ECO:0007669"/>
    <property type="project" value="UniProtKB-KW"/>
</dbReference>
<dbReference type="InterPro" id="IPR008213">
    <property type="entry name" value="CpcD-like_dom"/>
</dbReference>
<dbReference type="Pfam" id="PF01383">
    <property type="entry name" value="CpcD"/>
    <property type="match status" value="1"/>
</dbReference>
<dbReference type="SMART" id="SM01094">
    <property type="entry name" value="CpcD"/>
    <property type="match status" value="1"/>
</dbReference>
<dbReference type="PROSITE" id="PS51441">
    <property type="entry name" value="CPCD_LIKE"/>
    <property type="match status" value="1"/>
</dbReference>
<reference key="1">
    <citation type="journal article" date="1988" name="Mol. Gen. Genet.">
        <title>A multigene family in Calothrix sp. PCC 7601 encodes phycocyanin, the major component of the cyanobacterial light harvesting antenna.</title>
        <authorList>
            <person name="Mazel D."/>
            <person name="Houmard J."/>
            <person name="Tandeau de Marsac N."/>
        </authorList>
    </citation>
    <scope>NUCLEOTIDE SEQUENCE [GENOMIC DNA]</scope>
</reference>
<reference key="2">
    <citation type="journal article" date="1989" name="Nature">
        <title>Adaptive eradication of methionine and cysteine from cyanobacterial light-harvesting proteins.</title>
        <authorList>
            <person name="Mazel D."/>
            <person name="Marliere P."/>
        </authorList>
    </citation>
    <scope>NUCLEOTIDE SEQUENCE [GENOMIC DNA]</scope>
</reference>
<organism>
    <name type="scientific">Microchaete diplosiphon</name>
    <name type="common">Fremyella diplosiphon</name>
    <dbReference type="NCBI Taxonomy" id="1197"/>
    <lineage>
        <taxon>Bacteria</taxon>
        <taxon>Bacillati</taxon>
        <taxon>Cyanobacteriota</taxon>
        <taxon>Cyanophyceae</taxon>
        <taxon>Nostocales</taxon>
        <taxon>Rivulariaceae</taxon>
        <taxon>Microchaete</taxon>
    </lineage>
</organism>
<comment type="function">
    <text>Rod linker protein, associated with phycocyanin. Linker polypeptides determine the state of aggregation and the location of the disk-shaped phycobiliprotein units within the phycobilisome and modulate their spectroscopic properties in order to mediate a directed and optimal energy transfer.</text>
</comment>
<comment type="subcellular location">
    <subcellularLocation>
        <location evidence="1">Cellular thylakoid membrane</location>
        <topology evidence="1">Peripheral membrane protein</topology>
        <orientation evidence="1">Cytoplasmic side</orientation>
    </subcellularLocation>
    <text evidence="3">This protein occurs in the rod, it is associated with phycocyanin.</text>
</comment>
<comment type="similarity">
    <text evidence="3">Belongs to the phycobilisome linker protein family.</text>
</comment>
<feature type="chain" id="PRO_0000199229" description="Phycobilisome 8.1 kDa linker polypeptide, phycocyanin-associated, rod">
    <location>
        <begin position="1"/>
        <end position="70"/>
    </location>
</feature>
<feature type="domain" description="CpcD-like" evidence="2">
    <location>
        <begin position="5"/>
        <end position="63"/>
    </location>
</feature>
<protein>
    <recommendedName>
        <fullName>Phycobilisome 8.1 kDa linker polypeptide, phycocyanin-associated, rod</fullName>
        <shortName>L-8.1/R</shortName>
    </recommendedName>
    <alternativeName>
        <fullName>Rod-capping linker protein</fullName>
    </alternativeName>
</protein>
<name>PYS2_MICDP</name>
<sequence>MVYQSRSFQVEVSGLHQNEVTNQNNYPIRSSGSVFITIPFSRFNEELQRINRLGGKIVNIQPLNLQINEN</sequence>
<keyword id="KW-0042">Antenna complex</keyword>
<keyword id="KW-0472">Membrane</keyword>
<keyword id="KW-0602">Photosynthesis</keyword>
<keyword id="KW-0605">Phycobilisome</keyword>
<keyword id="KW-0793">Thylakoid</keyword>
<evidence type="ECO:0000250" key="1"/>
<evidence type="ECO:0000255" key="2">
    <source>
        <dbReference type="PROSITE-ProRule" id="PRU00771"/>
    </source>
</evidence>
<evidence type="ECO:0000305" key="3"/>
<proteinExistence type="inferred from homology"/>